<gene>
    <name type="primary">CCT4</name>
</gene>
<protein>
    <recommendedName>
        <fullName>T-complex protein 1 subunit delta</fullName>
        <shortName>TCP-1-delta</shortName>
        <ecNumber evidence="1">3.6.1.-</ecNumber>
    </recommendedName>
    <alternativeName>
        <fullName>CCT-delta</fullName>
    </alternativeName>
</protein>
<accession>Q2T9X2</accession>
<reference key="1">
    <citation type="submission" date="2005-12" db="EMBL/GenBank/DDBJ databases">
        <authorList>
            <consortium name="NIH - Mammalian Gene Collection (MGC) project"/>
        </authorList>
    </citation>
    <scope>NUCLEOTIDE SEQUENCE [LARGE SCALE MRNA]</scope>
    <source>
        <strain>Crossbred X Angus</strain>
        <tissue>Liver</tissue>
    </source>
</reference>
<dbReference type="EC" id="3.6.1.-" evidence="1"/>
<dbReference type="EMBL" id="BC111225">
    <property type="protein sequence ID" value="AAI11226.1"/>
    <property type="molecule type" value="mRNA"/>
</dbReference>
<dbReference type="RefSeq" id="NP_001033283.1">
    <property type="nucleotide sequence ID" value="NM_001038194.1"/>
</dbReference>
<dbReference type="PDB" id="3IYG">
    <property type="method" value="EM"/>
    <property type="chains" value="D=25-542"/>
</dbReference>
<dbReference type="PDB" id="4B2T">
    <property type="method" value="X-ray"/>
    <property type="resolution" value="5.50 A"/>
    <property type="chains" value="D/d=1-542"/>
</dbReference>
<dbReference type="PDBsum" id="3IYG"/>
<dbReference type="PDBsum" id="4B2T"/>
<dbReference type="SMR" id="Q2T9X2"/>
<dbReference type="BioGRID" id="541067">
    <property type="interactions" value="2"/>
</dbReference>
<dbReference type="CORUM" id="Q2T9X2"/>
<dbReference type="DIP" id="DIP-58619N"/>
<dbReference type="FunCoup" id="Q2T9X2">
    <property type="interactions" value="4192"/>
</dbReference>
<dbReference type="IntAct" id="Q2T9X2">
    <property type="interactions" value="1"/>
</dbReference>
<dbReference type="STRING" id="9913.ENSBTAP00000042274"/>
<dbReference type="PaxDb" id="9913-ENSBTAP00000042274"/>
<dbReference type="PeptideAtlas" id="Q2T9X2"/>
<dbReference type="GeneID" id="613336"/>
<dbReference type="KEGG" id="bta:613336"/>
<dbReference type="CTD" id="10575"/>
<dbReference type="eggNOG" id="KOG0358">
    <property type="taxonomic scope" value="Eukaryota"/>
</dbReference>
<dbReference type="InParanoid" id="Q2T9X2"/>
<dbReference type="OrthoDB" id="10248520at2759"/>
<dbReference type="EvolutionaryTrace" id="Q2T9X2"/>
<dbReference type="Proteomes" id="UP000009136">
    <property type="component" value="Unplaced"/>
</dbReference>
<dbReference type="GO" id="GO:0005813">
    <property type="term" value="C:centrosome"/>
    <property type="evidence" value="ECO:0007669"/>
    <property type="project" value="UniProtKB-SubCell"/>
</dbReference>
<dbReference type="GO" id="GO:0005832">
    <property type="term" value="C:chaperonin-containing T-complex"/>
    <property type="evidence" value="ECO:0000314"/>
    <property type="project" value="UniProtKB"/>
</dbReference>
<dbReference type="GO" id="GO:0005929">
    <property type="term" value="C:cilium"/>
    <property type="evidence" value="ECO:0007669"/>
    <property type="project" value="UniProtKB-KW"/>
</dbReference>
<dbReference type="GO" id="GO:0042470">
    <property type="term" value="C:melanosome"/>
    <property type="evidence" value="ECO:0007669"/>
    <property type="project" value="UniProtKB-SubCell"/>
</dbReference>
<dbReference type="GO" id="GO:0005524">
    <property type="term" value="F:ATP binding"/>
    <property type="evidence" value="ECO:0007669"/>
    <property type="project" value="UniProtKB-KW"/>
</dbReference>
<dbReference type="GO" id="GO:0016887">
    <property type="term" value="F:ATP hydrolysis activity"/>
    <property type="evidence" value="ECO:0007669"/>
    <property type="project" value="InterPro"/>
</dbReference>
<dbReference type="GO" id="GO:0140662">
    <property type="term" value="F:ATP-dependent protein folding chaperone"/>
    <property type="evidence" value="ECO:0007669"/>
    <property type="project" value="InterPro"/>
</dbReference>
<dbReference type="GO" id="GO:0051082">
    <property type="term" value="F:unfolded protein binding"/>
    <property type="evidence" value="ECO:0000318"/>
    <property type="project" value="GO_Central"/>
</dbReference>
<dbReference type="GO" id="GO:0006457">
    <property type="term" value="P:protein folding"/>
    <property type="evidence" value="ECO:0000318"/>
    <property type="project" value="GO_Central"/>
</dbReference>
<dbReference type="CDD" id="cd03338">
    <property type="entry name" value="TCP1_delta"/>
    <property type="match status" value="1"/>
</dbReference>
<dbReference type="FunFam" id="3.50.7.10:FF:000010">
    <property type="entry name" value="T-complex protein 1 subunit delta"/>
    <property type="match status" value="1"/>
</dbReference>
<dbReference type="Gene3D" id="3.50.7.10">
    <property type="entry name" value="GroEL"/>
    <property type="match status" value="1"/>
</dbReference>
<dbReference type="Gene3D" id="1.10.560.10">
    <property type="entry name" value="GroEL-like equatorial domain"/>
    <property type="match status" value="1"/>
</dbReference>
<dbReference type="Gene3D" id="3.30.260.10">
    <property type="entry name" value="TCP-1-like chaperonin intermediate domain"/>
    <property type="match status" value="1"/>
</dbReference>
<dbReference type="InterPro" id="IPR012717">
    <property type="entry name" value="Chap_CCT_delta"/>
</dbReference>
<dbReference type="InterPro" id="IPR017998">
    <property type="entry name" value="Chaperone_TCP-1"/>
</dbReference>
<dbReference type="InterPro" id="IPR002194">
    <property type="entry name" value="Chaperonin_TCP-1_CS"/>
</dbReference>
<dbReference type="InterPro" id="IPR002423">
    <property type="entry name" value="Cpn60/GroEL/TCP-1"/>
</dbReference>
<dbReference type="InterPro" id="IPR027409">
    <property type="entry name" value="GroEL-like_apical_dom_sf"/>
</dbReference>
<dbReference type="InterPro" id="IPR027413">
    <property type="entry name" value="GROEL-like_equatorial_sf"/>
</dbReference>
<dbReference type="InterPro" id="IPR027410">
    <property type="entry name" value="TCP-1-like_intermed_sf"/>
</dbReference>
<dbReference type="InterPro" id="IPR053374">
    <property type="entry name" value="TCP-1_chaperonin"/>
</dbReference>
<dbReference type="InterPro" id="IPR054827">
    <property type="entry name" value="thermosome_alpha"/>
</dbReference>
<dbReference type="NCBIfam" id="TIGR02342">
    <property type="entry name" value="chap_CCT_delta"/>
    <property type="match status" value="1"/>
</dbReference>
<dbReference type="NCBIfam" id="NF041082">
    <property type="entry name" value="thermosome_alpha"/>
    <property type="match status" value="1"/>
</dbReference>
<dbReference type="NCBIfam" id="NF041083">
    <property type="entry name" value="thermosome_beta"/>
    <property type="match status" value="1"/>
</dbReference>
<dbReference type="PANTHER" id="PTHR11353">
    <property type="entry name" value="CHAPERONIN"/>
    <property type="match status" value="1"/>
</dbReference>
<dbReference type="Pfam" id="PF00118">
    <property type="entry name" value="Cpn60_TCP1"/>
    <property type="match status" value="1"/>
</dbReference>
<dbReference type="PRINTS" id="PR00304">
    <property type="entry name" value="TCOMPLEXTCP1"/>
</dbReference>
<dbReference type="SUPFAM" id="SSF52029">
    <property type="entry name" value="GroEL apical domain-like"/>
    <property type="match status" value="1"/>
</dbReference>
<dbReference type="SUPFAM" id="SSF48592">
    <property type="entry name" value="GroEL equatorial domain-like"/>
    <property type="match status" value="1"/>
</dbReference>
<dbReference type="SUPFAM" id="SSF54849">
    <property type="entry name" value="GroEL-intermediate domain like"/>
    <property type="match status" value="1"/>
</dbReference>
<dbReference type="PROSITE" id="PS00750">
    <property type="entry name" value="TCP1_1"/>
    <property type="match status" value="1"/>
</dbReference>
<dbReference type="PROSITE" id="PS00751">
    <property type="entry name" value="TCP1_2"/>
    <property type="match status" value="1"/>
</dbReference>
<dbReference type="PROSITE" id="PS00995">
    <property type="entry name" value="TCP1_3"/>
    <property type="match status" value="1"/>
</dbReference>
<sequence>MPENVAPRTGPPAGAAGAAGGRGKSAYQDRDKPAQIRFSNISAAKAVADAIRTSLGPKGMDKMIQDGKGDVTITNDGATILKQMQVLHPAARMLVELSKAQDIEAGDGTTSVVIIAGSLLDSCTKLLQKGIHPTIISESFQKALEKGIEILTDMSRPEELSDRETLLNSAATSLNSKVVSQYSSLLSPMSVDAVMKVIDPATATSVDLRDIKIVKKLGGTIDDCELVEGLVLTQKVANSGITRVEKAKIGLIQFCLSAPKTDMDNQIVVSDYVQMDRVLREERAYILNLVKQIKKTGCNVLLIQKSILRDALSDLALHFLNKMKIMVVKDIEREDIEFICKTIGTKPVAHVDQFTADMLGSAELAEEVSLNGSGKLIKITGCASPGKTVTIVVRGSNKLVIEEAERSIHDALCVIRCLVKKRALIAGGGAPEIELALRLTEYSRTLSGMESYCIRAFADAMEVIPSTLAENAGLNPISTVTELRNRHAQGEKTTGINVRKGGISNILEEQVVQPLLVSVSALTLATETVRSILKIDDVVNTR</sequence>
<keyword id="KW-0002">3D-structure</keyword>
<keyword id="KW-0007">Acetylation</keyword>
<keyword id="KW-0067">ATP-binding</keyword>
<keyword id="KW-0966">Cell projection</keyword>
<keyword id="KW-0143">Chaperone</keyword>
<keyword id="KW-0969">Cilium</keyword>
<keyword id="KW-0963">Cytoplasm</keyword>
<keyword id="KW-0206">Cytoskeleton</keyword>
<keyword id="KW-0378">Hydrolase</keyword>
<keyword id="KW-0460">Magnesium</keyword>
<keyword id="KW-0479">Metal-binding</keyword>
<keyword id="KW-0488">Methylation</keyword>
<keyword id="KW-0547">Nucleotide-binding</keyword>
<keyword id="KW-0597">Phosphoprotein</keyword>
<keyword id="KW-1185">Reference proteome</keyword>
<name>TCPD_BOVIN</name>
<organism>
    <name type="scientific">Bos taurus</name>
    <name type="common">Bovine</name>
    <dbReference type="NCBI Taxonomy" id="9913"/>
    <lineage>
        <taxon>Eukaryota</taxon>
        <taxon>Metazoa</taxon>
        <taxon>Chordata</taxon>
        <taxon>Craniata</taxon>
        <taxon>Vertebrata</taxon>
        <taxon>Euteleostomi</taxon>
        <taxon>Mammalia</taxon>
        <taxon>Eutheria</taxon>
        <taxon>Laurasiatheria</taxon>
        <taxon>Artiodactyla</taxon>
        <taxon>Ruminantia</taxon>
        <taxon>Pecora</taxon>
        <taxon>Bovidae</taxon>
        <taxon>Bovinae</taxon>
        <taxon>Bos</taxon>
    </lineage>
</organism>
<comment type="function">
    <text evidence="1">Component of the chaperonin-containing T-complex (TRiC), a molecular chaperone complex that assists the folding of actin, tubulin and other proteins upon ATP hydrolysis. The TRiC complex mediates the folding of WRAP53/TCAB1, thereby regulating telomere maintenance. As part of the TRiC complex may play a role in the assembly of BBSome, a complex involved in ciliogenesis regulating transports vesicles to the cilia.</text>
</comment>
<comment type="catalytic activity">
    <reaction evidence="1">
        <text>ATP + H2O = ADP + phosphate + H(+)</text>
        <dbReference type="Rhea" id="RHEA:13065"/>
        <dbReference type="ChEBI" id="CHEBI:15377"/>
        <dbReference type="ChEBI" id="CHEBI:15378"/>
        <dbReference type="ChEBI" id="CHEBI:30616"/>
        <dbReference type="ChEBI" id="CHEBI:43474"/>
        <dbReference type="ChEBI" id="CHEBI:456216"/>
    </reaction>
</comment>
<comment type="subunit">
    <text evidence="1 2">Component of the chaperonin-containing T-complex (TRiC), a hexadecamer composed of two identical back-to-back stacked rings enclosing a protein folding chamber. Each ring is made up of eight different subunits: TCP1/CCT1, CCT2, CCT3, CCT4, CCT5, CCT6A/CCT6, CCT7, CCT8. Interacts with PACRG (By similarity). Interacts with DNAAF4 (By similarity). Interacts with DLEC1 (By similarity).</text>
</comment>
<comment type="subcellular location">
    <subcellularLocation>
        <location evidence="1">Cytoplasm</location>
    </subcellularLocation>
    <subcellularLocation>
        <location evidence="1">Melanosome</location>
    </subcellularLocation>
    <subcellularLocation>
        <location evidence="1">Cytoplasm</location>
        <location evidence="1">Cytoskeleton</location>
        <location evidence="1">Microtubule organizing center</location>
        <location evidence="1">Centrosome</location>
    </subcellularLocation>
    <subcellularLocation>
        <location evidence="2">Cytoplasm</location>
        <location evidence="2">Cytoskeleton</location>
        <location evidence="2">Cilium basal body</location>
    </subcellularLocation>
</comment>
<comment type="similarity">
    <text evidence="4">Belongs to the TCP-1 chaperonin family.</text>
</comment>
<proteinExistence type="evidence at protein level"/>
<feature type="chain" id="PRO_0000236261" description="T-complex protein 1 subunit delta">
    <location>
        <begin position="1"/>
        <end position="542"/>
    </location>
</feature>
<feature type="region of interest" description="Disordered" evidence="3">
    <location>
        <begin position="1"/>
        <end position="31"/>
    </location>
</feature>
<feature type="compositionally biased region" description="Low complexity" evidence="3">
    <location>
        <begin position="1"/>
        <end position="16"/>
    </location>
</feature>
<feature type="binding site" evidence="1">
    <location>
        <position position="56"/>
    </location>
    <ligand>
        <name>ADP</name>
        <dbReference type="ChEBI" id="CHEBI:456216"/>
    </ligand>
</feature>
<feature type="binding site" evidence="1">
    <location>
        <position position="56"/>
    </location>
    <ligand>
        <name>ATP</name>
        <dbReference type="ChEBI" id="CHEBI:30616"/>
    </ligand>
</feature>
<feature type="binding site" evidence="1">
    <location>
        <position position="107"/>
    </location>
    <ligand>
        <name>Mg(2+)</name>
        <dbReference type="ChEBI" id="CHEBI:18420"/>
    </ligand>
</feature>
<feature type="binding site" evidence="1">
    <location>
        <position position="108"/>
    </location>
    <ligand>
        <name>ADP</name>
        <dbReference type="ChEBI" id="CHEBI:456216"/>
    </ligand>
</feature>
<feature type="binding site" evidence="1">
    <location>
        <position position="108"/>
    </location>
    <ligand>
        <name>ATP</name>
        <dbReference type="ChEBI" id="CHEBI:30616"/>
    </ligand>
</feature>
<feature type="binding site" evidence="1">
    <location>
        <position position="109"/>
    </location>
    <ligand>
        <name>ADP</name>
        <dbReference type="ChEBI" id="CHEBI:456216"/>
    </ligand>
</feature>
<feature type="binding site" evidence="1">
    <location>
        <position position="109"/>
    </location>
    <ligand>
        <name>ATP</name>
        <dbReference type="ChEBI" id="CHEBI:30616"/>
    </ligand>
</feature>
<feature type="binding site" evidence="1">
    <location>
        <position position="110"/>
    </location>
    <ligand>
        <name>ADP</name>
        <dbReference type="ChEBI" id="CHEBI:456216"/>
    </ligand>
</feature>
<feature type="binding site" evidence="1">
    <location>
        <position position="111"/>
    </location>
    <ligand>
        <name>ADP</name>
        <dbReference type="ChEBI" id="CHEBI:456216"/>
    </ligand>
</feature>
<feature type="binding site" evidence="1">
    <location>
        <position position="175"/>
    </location>
    <ligand>
        <name>ADP</name>
        <dbReference type="ChEBI" id="CHEBI:456216"/>
    </ligand>
</feature>
<feature type="binding site" evidence="1">
    <location>
        <position position="176"/>
    </location>
    <ligand>
        <name>ADP</name>
        <dbReference type="ChEBI" id="CHEBI:456216"/>
    </ligand>
</feature>
<feature type="binding site" evidence="1">
    <location>
        <position position="177"/>
    </location>
    <ligand>
        <name>ADP</name>
        <dbReference type="ChEBI" id="CHEBI:456216"/>
    </ligand>
</feature>
<feature type="binding site" evidence="1">
    <location>
        <position position="177"/>
    </location>
    <ligand>
        <name>ATP</name>
        <dbReference type="ChEBI" id="CHEBI:30616"/>
    </ligand>
</feature>
<feature type="binding site" evidence="1">
    <location>
        <position position="428"/>
    </location>
    <ligand>
        <name>ADP</name>
        <dbReference type="ChEBI" id="CHEBI:456216"/>
    </ligand>
</feature>
<feature type="binding site" evidence="1">
    <location>
        <position position="513"/>
    </location>
    <ligand>
        <name>ADP</name>
        <dbReference type="ChEBI" id="CHEBI:456216"/>
    </ligand>
</feature>
<feature type="modified residue" description="Omega-N-methylarginine" evidence="1">
    <location>
        <position position="22"/>
    </location>
</feature>
<feature type="modified residue" description="N6-acetyllysine" evidence="2">
    <location>
        <position position="24"/>
    </location>
</feature>
<feature type="modified residue" description="Phosphoserine" evidence="1">
    <location>
        <position position="39"/>
    </location>
</feature>
<feature type="modified residue" description="Phosphoserine" evidence="1">
    <location>
        <position position="187"/>
    </location>
</feature>
<feature type="modified residue" description="Phosphoserine" evidence="1">
    <location>
        <position position="205"/>
    </location>
</feature>
<feature type="modified residue" description="N6-acetyllysine" evidence="1">
    <location>
        <position position="291"/>
    </location>
</feature>
<feature type="modified residue" description="N6-acetyllysine" evidence="1">
    <location>
        <position position="305"/>
    </location>
</feature>
<feature type="modified residue" description="N6-acetyllysine" evidence="1">
    <location>
        <position position="322"/>
    </location>
</feature>
<feature type="modified residue" description="N6-acetyllysine" evidence="1">
    <location>
        <position position="329"/>
    </location>
</feature>
<feature type="modified residue" description="Phosphoserine" evidence="1">
    <location>
        <position position="447"/>
    </location>
</feature>
<evidence type="ECO:0000250" key="1">
    <source>
        <dbReference type="UniProtKB" id="P50991"/>
    </source>
</evidence>
<evidence type="ECO:0000250" key="2">
    <source>
        <dbReference type="UniProtKB" id="P80315"/>
    </source>
</evidence>
<evidence type="ECO:0000256" key="3">
    <source>
        <dbReference type="SAM" id="MobiDB-lite"/>
    </source>
</evidence>
<evidence type="ECO:0000305" key="4"/>